<organism>
    <name type="scientific">Rattus norvegicus</name>
    <name type="common">Rat</name>
    <dbReference type="NCBI Taxonomy" id="10116"/>
    <lineage>
        <taxon>Eukaryota</taxon>
        <taxon>Metazoa</taxon>
        <taxon>Chordata</taxon>
        <taxon>Craniata</taxon>
        <taxon>Vertebrata</taxon>
        <taxon>Euteleostomi</taxon>
        <taxon>Mammalia</taxon>
        <taxon>Eutheria</taxon>
        <taxon>Euarchontoglires</taxon>
        <taxon>Glires</taxon>
        <taxon>Rodentia</taxon>
        <taxon>Myomorpha</taxon>
        <taxon>Muroidea</taxon>
        <taxon>Muridae</taxon>
        <taxon>Murinae</taxon>
        <taxon>Rattus</taxon>
    </lineage>
</organism>
<name>M3K8_RAT</name>
<gene>
    <name type="primary">Map3k8</name>
    <name type="synonym">Tpl2</name>
</gene>
<feature type="chain" id="PRO_0000086257" description="Mitogen-activated protein kinase kinase kinase 8">
    <location>
        <begin position="1"/>
        <end position="467"/>
    </location>
</feature>
<feature type="domain" description="Protein kinase" evidence="3">
    <location>
        <begin position="146"/>
        <end position="388"/>
    </location>
</feature>
<feature type="active site" description="Proton acceptor" evidence="3 4">
    <location>
        <position position="253"/>
    </location>
</feature>
<feature type="binding site" evidence="3">
    <location>
        <begin position="144"/>
        <end position="152"/>
    </location>
    <ligand>
        <name>ATP</name>
        <dbReference type="ChEBI" id="CHEBI:30616"/>
    </ligand>
</feature>
<feature type="binding site" evidence="3">
    <location>
        <position position="167"/>
    </location>
    <ligand>
        <name>ATP</name>
        <dbReference type="ChEBI" id="CHEBI:30616"/>
    </ligand>
</feature>
<feature type="modified residue" description="Phosphothreonine" evidence="2">
    <location>
        <position position="80"/>
    </location>
</feature>
<feature type="modified residue" description="Phosphoserine" evidence="8">
    <location>
        <position position="138"/>
    </location>
</feature>
<feature type="modified residue" description="Phosphoserine" evidence="8">
    <location>
        <position position="141"/>
    </location>
</feature>
<feature type="modified residue" description="Phosphothreonine" evidence="2">
    <location>
        <position position="290"/>
    </location>
</feature>
<feature type="modified residue" description="Phosphoserine" evidence="2">
    <location>
        <position position="400"/>
    </location>
</feature>
<feature type="modified residue" description="Phosphoserine" evidence="2">
    <location>
        <position position="443"/>
    </location>
</feature>
<sequence>MEYMSTGSDEKEEIDLLINHLNVSEVLDIMENLYASEEPAVYEPSLMTMCPDSNQNKEHSESLLRSGQEVPWLSSVRYGTVEDLLAFANHISNTTKHFYRCRPQESGILLNMVISPQNGRYQIDSDVLLVPWKLTYRSIGSGFVPRGAFGKVYLAQDMKTKKRMACKLIPVDQFKPSDVEIQACFRHENIAELYGAVLWGDTVHLFMEAGEGGSVLEKLESCGPMREFEIIWVTKHVLKGLDFLHSKKVIHHDIKPSNIVFMSTKAVLVDFGLSVQMTEDVYLPKDLRGTEIYMSPEVILCRGHSTKADIYSLGATLIHMQTGTPPWVKRYPRSAYPSYLYIIHKQAPPLEDIAGDCSPGMRELIEAALERNPNHRPKAADLLKHEALNPPREDQPRCQSLDSALFDRKRLLSRKELELPENIADSSCTGSTEESEVLRRQRSLYIDLGALAGYFNIVRGPPTLEYG</sequence>
<comment type="function">
    <text evidence="5">Required for lipopolysaccharide (LPS)-induced, TLR4-mediated activation of the MAPK/ERK pathway in macrophages, thus being critical for production of the pro-inflammatory cytokine TNF-alpha (TNF) during immune responses. Involved in the regulation of T-helper cell differentiation and IFNG expression in T-cells. Involved in mediating host resistance to bacterial infection through negative regulation of type I interferon (IFN) production. Transduces CD40 and TNFRSF1A signals that activate ERK in B-cells and macrophages, and thus may play a role in the regulation of immunoglobulin production. May also play a role in the transduction of TNF signals that activate JNK and NF-kappa-B in some cell types. In adipocytes, activates MAPK/ERK pathway in an IKBKB-dependent manner in response to IL1B and TNF, but not insulin, leading to induction of lipolysis. Plays a role in the cell cycle.</text>
</comment>
<comment type="catalytic activity">
    <reaction>
        <text>L-seryl-[protein] + ATP = O-phospho-L-seryl-[protein] + ADP + H(+)</text>
        <dbReference type="Rhea" id="RHEA:17989"/>
        <dbReference type="Rhea" id="RHEA-COMP:9863"/>
        <dbReference type="Rhea" id="RHEA-COMP:11604"/>
        <dbReference type="ChEBI" id="CHEBI:15378"/>
        <dbReference type="ChEBI" id="CHEBI:29999"/>
        <dbReference type="ChEBI" id="CHEBI:30616"/>
        <dbReference type="ChEBI" id="CHEBI:83421"/>
        <dbReference type="ChEBI" id="CHEBI:456216"/>
        <dbReference type="EC" id="2.7.11.25"/>
    </reaction>
</comment>
<comment type="catalytic activity">
    <reaction>
        <text>L-threonyl-[protein] + ATP = O-phospho-L-threonyl-[protein] + ADP + H(+)</text>
        <dbReference type="Rhea" id="RHEA:46608"/>
        <dbReference type="Rhea" id="RHEA-COMP:11060"/>
        <dbReference type="Rhea" id="RHEA-COMP:11605"/>
        <dbReference type="ChEBI" id="CHEBI:15378"/>
        <dbReference type="ChEBI" id="CHEBI:30013"/>
        <dbReference type="ChEBI" id="CHEBI:30616"/>
        <dbReference type="ChEBI" id="CHEBI:61977"/>
        <dbReference type="ChEBI" id="CHEBI:456216"/>
        <dbReference type="EC" id="2.7.11.25"/>
    </reaction>
</comment>
<comment type="cofactor">
    <cofactor evidence="1">
        <name>Mg(2+)</name>
        <dbReference type="ChEBI" id="CHEBI:18420"/>
    </cofactor>
</comment>
<comment type="subunit">
    <text evidence="6">Forms a ternary complex with NFKB1/p105 and TNIP2. Interacts with NFKB1; the interaction increases the stability of MAP3K8 but inhibits its MEK phosphorylation activity, whereas loss of interaction following LPS stimulation leads to its degradation. Interacts with CD40 and TRAF6; the interaction is required for ERK activation. Interacts with KSR2; the interaction inhibits ERK and NF-kappa-B activation.</text>
</comment>
<comment type="subcellular location">
    <subcellularLocation>
        <location evidence="1">Cytoplasm</location>
    </subcellularLocation>
</comment>
<comment type="tissue specificity">
    <text evidence="5">Expressed in spleen, thymus, liver and lung.</text>
</comment>
<comment type="PTM">
    <text evidence="1">Autophosphorylated.</text>
</comment>
<comment type="similarity">
    <text evidence="7">Belongs to the protein kinase superfamily. STE Ser/Thr protein kinase family. MAP kinase kinase kinase subfamily.</text>
</comment>
<proteinExistence type="evidence at protein level"/>
<dbReference type="EC" id="2.7.11.25"/>
<dbReference type="EMBL" id="M94454">
    <property type="protein sequence ID" value="AAA42185.1"/>
    <property type="molecule type" value="mRNA"/>
</dbReference>
<dbReference type="PIR" id="A47388">
    <property type="entry name" value="A47388"/>
</dbReference>
<dbReference type="RefSeq" id="NP_446299.1">
    <property type="nucleotide sequence ID" value="NM_053847.1"/>
</dbReference>
<dbReference type="SMR" id="Q63562"/>
<dbReference type="FunCoup" id="Q63562">
    <property type="interactions" value="1232"/>
</dbReference>
<dbReference type="STRING" id="10116.ENSRNOP00000022190"/>
<dbReference type="iPTMnet" id="Q63562"/>
<dbReference type="PhosphoSitePlus" id="Q63562"/>
<dbReference type="PaxDb" id="10116-ENSRNOP00000022190"/>
<dbReference type="GeneID" id="116596"/>
<dbReference type="KEGG" id="rno:116596"/>
<dbReference type="UCSC" id="RGD:620969">
    <property type="organism name" value="rat"/>
</dbReference>
<dbReference type="AGR" id="RGD:620969"/>
<dbReference type="CTD" id="1326"/>
<dbReference type="RGD" id="620969">
    <property type="gene designation" value="Map3k8"/>
</dbReference>
<dbReference type="eggNOG" id="KOG0201">
    <property type="taxonomic scope" value="Eukaryota"/>
</dbReference>
<dbReference type="InParanoid" id="Q63562"/>
<dbReference type="OrthoDB" id="8693905at2759"/>
<dbReference type="PhylomeDB" id="Q63562"/>
<dbReference type="Reactome" id="R-RNO-389357">
    <property type="pathway name" value="CD28 dependent PI3K/Akt signaling"/>
</dbReference>
<dbReference type="PRO" id="PR:Q63562"/>
<dbReference type="Proteomes" id="UP000002494">
    <property type="component" value="Unplaced"/>
</dbReference>
<dbReference type="GO" id="GO:0005737">
    <property type="term" value="C:cytoplasm"/>
    <property type="evidence" value="ECO:0000266"/>
    <property type="project" value="RGD"/>
</dbReference>
<dbReference type="GO" id="GO:0005829">
    <property type="term" value="C:cytosol"/>
    <property type="evidence" value="ECO:0000304"/>
    <property type="project" value="Reactome"/>
</dbReference>
<dbReference type="GO" id="GO:0005524">
    <property type="term" value="F:ATP binding"/>
    <property type="evidence" value="ECO:0007669"/>
    <property type="project" value="UniProtKB-KW"/>
</dbReference>
<dbReference type="GO" id="GO:0000287">
    <property type="term" value="F:magnesium ion binding"/>
    <property type="evidence" value="ECO:0007669"/>
    <property type="project" value="InterPro"/>
</dbReference>
<dbReference type="GO" id="GO:0004709">
    <property type="term" value="F:MAP kinase kinase kinase activity"/>
    <property type="evidence" value="ECO:0000314"/>
    <property type="project" value="RGD"/>
</dbReference>
<dbReference type="GO" id="GO:0004672">
    <property type="term" value="F:protein kinase activity"/>
    <property type="evidence" value="ECO:0000314"/>
    <property type="project" value="RGD"/>
</dbReference>
<dbReference type="GO" id="GO:0106310">
    <property type="term" value="F:protein serine kinase activity"/>
    <property type="evidence" value="ECO:0007669"/>
    <property type="project" value="RHEA"/>
</dbReference>
<dbReference type="GO" id="GO:0003231">
    <property type="term" value="P:cardiac ventricle development"/>
    <property type="evidence" value="ECO:0000270"/>
    <property type="project" value="RGD"/>
</dbReference>
<dbReference type="GO" id="GO:1990349">
    <property type="term" value="P:gap junction-mediated intercellular transport"/>
    <property type="evidence" value="ECO:0000315"/>
    <property type="project" value="RGD"/>
</dbReference>
<dbReference type="GO" id="GO:0002376">
    <property type="term" value="P:immune system process"/>
    <property type="evidence" value="ECO:0007669"/>
    <property type="project" value="UniProtKB-KW"/>
</dbReference>
<dbReference type="GO" id="GO:0000165">
    <property type="term" value="P:MAPK cascade"/>
    <property type="evidence" value="ECO:0000266"/>
    <property type="project" value="RGD"/>
</dbReference>
<dbReference type="GO" id="GO:0050729">
    <property type="term" value="P:positive regulation of inflammatory response"/>
    <property type="evidence" value="ECO:0000266"/>
    <property type="project" value="RGD"/>
</dbReference>
<dbReference type="CDD" id="cd13995">
    <property type="entry name" value="STKc_MAP3K8"/>
    <property type="match status" value="1"/>
</dbReference>
<dbReference type="FunFam" id="1.10.510.10:FF:000327">
    <property type="entry name" value="Mitogen-activated protein kinase kinase kinase 8"/>
    <property type="match status" value="1"/>
</dbReference>
<dbReference type="FunFam" id="3.30.200.20:FF:000283">
    <property type="entry name" value="Mitogen-activated protein kinase kinase kinase 8"/>
    <property type="match status" value="1"/>
</dbReference>
<dbReference type="Gene3D" id="3.30.200.20">
    <property type="entry name" value="Phosphorylase Kinase, domain 1"/>
    <property type="match status" value="1"/>
</dbReference>
<dbReference type="Gene3D" id="1.10.510.10">
    <property type="entry name" value="Transferase(Phosphotransferase) domain 1"/>
    <property type="match status" value="1"/>
</dbReference>
<dbReference type="InterPro" id="IPR011009">
    <property type="entry name" value="Kinase-like_dom_sf"/>
</dbReference>
<dbReference type="InterPro" id="IPR050538">
    <property type="entry name" value="MAP_kinase_kinase_kinase"/>
</dbReference>
<dbReference type="InterPro" id="IPR017424">
    <property type="entry name" value="MAPKKK8"/>
</dbReference>
<dbReference type="InterPro" id="IPR000719">
    <property type="entry name" value="Prot_kinase_dom"/>
</dbReference>
<dbReference type="InterPro" id="IPR008271">
    <property type="entry name" value="Ser/Thr_kinase_AS"/>
</dbReference>
<dbReference type="PANTHER" id="PTHR48016">
    <property type="entry name" value="MAP KINASE KINASE KINASE SSK2-RELATED-RELATED"/>
    <property type="match status" value="1"/>
</dbReference>
<dbReference type="PANTHER" id="PTHR48016:SF31">
    <property type="entry name" value="MITOGEN-ACTIVATED PROTEIN KINASE KINASE KINASE 8"/>
    <property type="match status" value="1"/>
</dbReference>
<dbReference type="Pfam" id="PF00069">
    <property type="entry name" value="Pkinase"/>
    <property type="match status" value="1"/>
</dbReference>
<dbReference type="PIRSF" id="PIRSF038171">
    <property type="entry name" value="MAPKKK8"/>
    <property type="match status" value="1"/>
</dbReference>
<dbReference type="SMART" id="SM00220">
    <property type="entry name" value="S_TKc"/>
    <property type="match status" value="1"/>
</dbReference>
<dbReference type="SUPFAM" id="SSF56112">
    <property type="entry name" value="Protein kinase-like (PK-like)"/>
    <property type="match status" value="1"/>
</dbReference>
<dbReference type="PROSITE" id="PS50011">
    <property type="entry name" value="PROTEIN_KINASE_DOM"/>
    <property type="match status" value="1"/>
</dbReference>
<dbReference type="PROSITE" id="PS00108">
    <property type="entry name" value="PROTEIN_KINASE_ST"/>
    <property type="match status" value="1"/>
</dbReference>
<protein>
    <recommendedName>
        <fullName>Mitogen-activated protein kinase kinase kinase 8</fullName>
        <ecNumber>2.7.11.25</ecNumber>
    </recommendedName>
    <alternativeName>
        <fullName>Tumor progression locus 2</fullName>
        <shortName>TPL-2</shortName>
    </alternativeName>
</protein>
<evidence type="ECO:0000250" key="1"/>
<evidence type="ECO:0000250" key="2">
    <source>
        <dbReference type="UniProtKB" id="P41279"/>
    </source>
</evidence>
<evidence type="ECO:0000255" key="3">
    <source>
        <dbReference type="PROSITE-ProRule" id="PRU00159"/>
    </source>
</evidence>
<evidence type="ECO:0000255" key="4">
    <source>
        <dbReference type="PROSITE-ProRule" id="PRU10027"/>
    </source>
</evidence>
<evidence type="ECO:0000269" key="5">
    <source>
    </source>
</evidence>
<evidence type="ECO:0000269" key="6">
    <source>
    </source>
</evidence>
<evidence type="ECO:0000305" key="7"/>
<evidence type="ECO:0007744" key="8">
    <source>
    </source>
</evidence>
<reference key="1">
    <citation type="journal article" date="1993" name="Proc. Natl. Acad. Sci. U.S.A.">
        <title>Tumor progression locus 2 (Tpl-2) encodes a protein kinase involved in the progression of rodent T-cell lymphomas and in T-cell activation.</title>
        <authorList>
            <person name="Patriotis C."/>
            <person name="Makris A."/>
            <person name="Bear S.E."/>
            <person name="Tsichlis P.N."/>
        </authorList>
    </citation>
    <scope>NUCLEOTIDE SEQUENCE [MRNA]</scope>
    <scope>FUNCTION</scope>
    <scope>TISSUE SPECIFICITY</scope>
    <source>
        <strain>Long Evans</strain>
        <tissue>Liver</tissue>
    </source>
</reference>
<reference key="2">
    <citation type="journal article" date="1999" name="Nature">
        <title>TPL-2 kinase regulates the proteolysis of the NF-kappaB-inhibitory protein NF-kappaB1 p105.</title>
        <authorList>
            <person name="Belich M.P."/>
            <person name="Salmeron A."/>
            <person name="Johnston L.H."/>
            <person name="Ley S.C."/>
        </authorList>
    </citation>
    <scope>INTERACTION WITH NFKB1</scope>
</reference>
<reference key="3">
    <citation type="journal article" date="2012" name="Nat. Commun.">
        <title>Quantitative maps of protein phosphorylation sites across 14 different rat organs and tissues.</title>
        <authorList>
            <person name="Lundby A."/>
            <person name="Secher A."/>
            <person name="Lage K."/>
            <person name="Nordsborg N.B."/>
            <person name="Dmytriyev A."/>
            <person name="Lundby C."/>
            <person name="Olsen J.V."/>
        </authorList>
    </citation>
    <scope>PHOSPHORYLATION [LARGE SCALE ANALYSIS] AT SER-138 AND SER-141</scope>
    <scope>IDENTIFICATION BY MASS SPECTROMETRY [LARGE SCALE ANALYSIS]</scope>
</reference>
<keyword id="KW-0067">ATP-binding</keyword>
<keyword id="KW-0131">Cell cycle</keyword>
<keyword id="KW-0963">Cytoplasm</keyword>
<keyword id="KW-0391">Immunity</keyword>
<keyword id="KW-0418">Kinase</keyword>
<keyword id="KW-0460">Magnesium</keyword>
<keyword id="KW-0479">Metal-binding</keyword>
<keyword id="KW-0547">Nucleotide-binding</keyword>
<keyword id="KW-0597">Phosphoprotein</keyword>
<keyword id="KW-0656">Proto-oncogene</keyword>
<keyword id="KW-1185">Reference proteome</keyword>
<keyword id="KW-0723">Serine/threonine-protein kinase</keyword>
<keyword id="KW-0808">Transferase</keyword>
<accession>Q63562</accession>